<reference key="1">
    <citation type="journal article" date="1991" name="J. Biol. Chem.">
        <title>Cloning, sequencing, and expression of pyrophosphate-dependent phosphofructokinase from Propionibacterium freudenreichii.</title>
        <authorList>
            <person name="Ladror U.S."/>
            <person name="Gollapudi L."/>
            <person name="Tripathi R.L."/>
            <person name="Latshaw S.P."/>
            <person name="Kemp R.G."/>
        </authorList>
    </citation>
    <scope>NUCLEOTIDE SEQUENCE [GENOMIC DNA]</scope>
    <scope>PARTIAL PROTEIN SEQUENCE</scope>
</reference>
<reference key="2">
    <citation type="journal article" date="2004" name="In Silico Biol.">
        <title>In silico exploration of the fructose-6-phosphate phosphorylation step in glycolysis: genomic evidence of the coexistence of an atypical ATP-dependent along with a PPi-dependent phosphofructokinase in Propionibacterium freudenreichii subsp. shermanii.</title>
        <authorList>
            <person name="Meurice G."/>
            <person name="Deborde C."/>
            <person name="Jacob D."/>
            <person name="Falentin H."/>
            <person name="Boyaval P."/>
            <person name="Dimova D."/>
        </authorList>
    </citation>
    <scope>NUCLEOTIDE SEQUENCE [GENOMIC DNA]</scope>
    <source>
        <strain>ATCC 9614 / DSM 4902 / CIP 103027 / NCIMB 8099 / CIRM-BIA1</strain>
    </source>
</reference>
<reference key="3">
    <citation type="journal article" date="2010" name="PLoS ONE">
        <title>The complete genome of Propionibacterium freudenreichii CIRM-BIA1, a hardy actinobacterium with food and probiotic applications.</title>
        <authorList>
            <person name="Falentin H."/>
            <person name="Deutsch S.M."/>
            <person name="Jan G."/>
            <person name="Loux V."/>
            <person name="Thierry A."/>
            <person name="Parayre S."/>
            <person name="Maillard M.B."/>
            <person name="Dherbecourt J."/>
            <person name="Cousin F.J."/>
            <person name="Jardin J."/>
            <person name="Siguier P."/>
            <person name="Couloux A."/>
            <person name="Barbe V."/>
            <person name="Vacherie B."/>
            <person name="Wincker P."/>
            <person name="Gibrat J.F."/>
            <person name="Gaillardin C."/>
            <person name="Lortal S."/>
        </authorList>
    </citation>
    <scope>NUCLEOTIDE SEQUENCE [LARGE SCALE GENOMIC DNA]</scope>
    <source>
        <strain>ATCC 9614 / DSM 4902 / CIP 103027 / NCIMB 8099 / CIRM-BIA1</strain>
    </source>
</reference>
<reference key="4">
    <citation type="journal article" date="1975" name="J. Biol. Chem.">
        <title>Isolation and characterization of a pyrophosphate-dependent phosphofructokinase from Propionibacterium shermanii.</title>
        <authorList>
            <person name="O'Brien W.E."/>
            <person name="Bowien S."/>
            <person name="Wood H.G."/>
        </authorList>
    </citation>
    <scope>FUNCTION</scope>
    <scope>CATALYTIC ACTIVITY</scope>
    <scope>BIOPHYSICOCHEMICAL PROPERTIES</scope>
    <scope>SUBUNIT</scope>
    <scope>ACTIVITY REGULATION</scope>
</reference>
<reference key="5">
    <citation type="journal article" date="1992" name="Biochemistry">
        <title>Identification of critical lysyl residues in the pyrophosphate-dependent phosphofructo-1-kinase of Propionibacterium freudenreichii.</title>
        <authorList>
            <person name="Green P.C."/>
            <person name="Latshaw S.P."/>
            <person name="Ladror U.S."/>
            <person name="Kemp R.G."/>
        </authorList>
    </citation>
    <scope>IDENTIFICATION OF CRITICAL LYSYL RESIDUES</scope>
</reference>
<organism>
    <name type="scientific">Propionibacterium freudenreichii subsp. shermanii (strain ATCC 9614 / DSM 4902 / CIP 103027 / NCIMB 8099 / CIRM-BIA1)</name>
    <dbReference type="NCBI Taxonomy" id="754252"/>
    <lineage>
        <taxon>Bacteria</taxon>
        <taxon>Bacillati</taxon>
        <taxon>Actinomycetota</taxon>
        <taxon>Actinomycetes</taxon>
        <taxon>Propionibacteriales</taxon>
        <taxon>Propionibacteriaceae</taxon>
        <taxon>Propionibacterium</taxon>
    </lineage>
</organism>
<dbReference type="EC" id="2.7.1.90" evidence="1"/>
<dbReference type="EMBL" id="M67447">
    <property type="protein sequence ID" value="AAA25675.1"/>
    <property type="molecule type" value="Genomic_DNA"/>
</dbReference>
<dbReference type="EMBL" id="AJ508922">
    <property type="protein sequence ID" value="CAD48602.1"/>
    <property type="molecule type" value="Genomic_DNA"/>
</dbReference>
<dbReference type="EMBL" id="FN806773">
    <property type="protein sequence ID" value="CBL56726.1"/>
    <property type="molecule type" value="Genomic_DNA"/>
</dbReference>
<dbReference type="PIR" id="A41169">
    <property type="entry name" value="A41169"/>
</dbReference>
<dbReference type="RefSeq" id="WP_013161100.1">
    <property type="nucleotide sequence ID" value="NC_014215.1"/>
</dbReference>
<dbReference type="SMR" id="P29495"/>
<dbReference type="STRING" id="754252.PFREUD_12040"/>
<dbReference type="KEGG" id="pfr:PFREUD_12040"/>
<dbReference type="eggNOG" id="COG0205">
    <property type="taxonomic scope" value="Bacteria"/>
</dbReference>
<dbReference type="HOGENOM" id="CLU_643544_0_0_11"/>
<dbReference type="SABIO-RK" id="P29495"/>
<dbReference type="UniPathway" id="UPA00109">
    <property type="reaction ID" value="UER00182"/>
</dbReference>
<dbReference type="Proteomes" id="UP000000936">
    <property type="component" value="Chromosome"/>
</dbReference>
<dbReference type="GO" id="GO:0005737">
    <property type="term" value="C:cytoplasm"/>
    <property type="evidence" value="ECO:0007669"/>
    <property type="project" value="UniProtKB-SubCell"/>
</dbReference>
<dbReference type="GO" id="GO:0003872">
    <property type="term" value="F:6-phosphofructokinase activity"/>
    <property type="evidence" value="ECO:0007669"/>
    <property type="project" value="UniProtKB-UniRule"/>
</dbReference>
<dbReference type="GO" id="GO:0047334">
    <property type="term" value="F:diphosphate-fructose-6-phosphate 1-phosphotransferase activity"/>
    <property type="evidence" value="ECO:0007669"/>
    <property type="project" value="UniProtKB-EC"/>
</dbReference>
<dbReference type="GO" id="GO:0046872">
    <property type="term" value="F:metal ion binding"/>
    <property type="evidence" value="ECO:0007669"/>
    <property type="project" value="UniProtKB-KW"/>
</dbReference>
<dbReference type="GO" id="GO:0006002">
    <property type="term" value="P:fructose 6-phosphate metabolic process"/>
    <property type="evidence" value="ECO:0007669"/>
    <property type="project" value="InterPro"/>
</dbReference>
<dbReference type="Gene3D" id="3.40.50.450">
    <property type="match status" value="1"/>
</dbReference>
<dbReference type="HAMAP" id="MF_01977">
    <property type="entry name" value="Phosphofructokinase_II_P"/>
    <property type="match status" value="1"/>
</dbReference>
<dbReference type="InterPro" id="IPR022953">
    <property type="entry name" value="ATP_PFK"/>
</dbReference>
<dbReference type="InterPro" id="IPR050929">
    <property type="entry name" value="PFKA"/>
</dbReference>
<dbReference type="InterPro" id="IPR000023">
    <property type="entry name" value="Phosphofructokinase_dom"/>
</dbReference>
<dbReference type="InterPro" id="IPR035966">
    <property type="entry name" value="PKF_sf"/>
</dbReference>
<dbReference type="InterPro" id="IPR011405">
    <property type="entry name" value="PPi-PFK_SMc01852"/>
</dbReference>
<dbReference type="NCBIfam" id="NF005121">
    <property type="entry name" value="PRK06555.1"/>
    <property type="match status" value="1"/>
</dbReference>
<dbReference type="PANTHER" id="PTHR45770">
    <property type="entry name" value="ATP-DEPENDENT 6-PHOSPHOFRUCTOKINASE 1"/>
    <property type="match status" value="1"/>
</dbReference>
<dbReference type="Pfam" id="PF00365">
    <property type="entry name" value="PFK"/>
    <property type="match status" value="1"/>
</dbReference>
<dbReference type="PIRSF" id="PIRSF036484">
    <property type="entry name" value="PPi-PFK_SMc01852"/>
    <property type="match status" value="1"/>
</dbReference>
<dbReference type="PRINTS" id="PR00476">
    <property type="entry name" value="PHFRCTKINASE"/>
</dbReference>
<dbReference type="SUPFAM" id="SSF53784">
    <property type="entry name" value="Phosphofructokinase"/>
    <property type="match status" value="1"/>
</dbReference>
<evidence type="ECO:0000255" key="1">
    <source>
        <dbReference type="HAMAP-Rule" id="MF_01977"/>
    </source>
</evidence>
<evidence type="ECO:0000269" key="2">
    <source>
    </source>
</evidence>
<name>PFP_PROFC</name>
<sequence length="404" mass="43246">MVKKVALLTAGGFAPCLSSAIAELIKRYTEVSPETTLIGYRYGYEGLLKGDSLEFSPAVRAHYDRLFSFGGSPIGNSRVKLTNVKDLVARGLVASGDDPLKVAADQLIADGVDVLHTIGGDDTNTTAADLAAYLAQHDYPLTVVGLPKTIDNDIVPIRQSLGAWTAADEGARFAANVIAEHNAAPRELIIHEIMGRNCGYLAAETSRRYVAWLDAQQWLPEAGLDRRGWDIHALYVPEATIDLDAEAERLRTVMDEVGSVNIFISEGAGVPDIVAQMQATGQEVPTDAFGHVQLDKINPGAWFAKQFAERIGAGKTMVQKSGYFSRSAKSNAQDLELIAATATMAVDAALAGTPGVVGQDEEAGDKLSVIDFKRIAGHKPFDITLDWYTQLLARIGQPAPIAAA</sequence>
<gene>
    <name evidence="1" type="primary">pfp</name>
    <name type="synonym">pfk</name>
    <name type="ordered locus">PFREUD_12040</name>
</gene>
<accession>P29495</accession>
<accession>D7GDW5</accession>
<accession>Q08I84</accession>
<feature type="initiator methionine" description="Removed">
    <location>
        <position position="1"/>
    </location>
</feature>
<feature type="chain" id="PRO_0000112013" description="Pyrophosphate--fructose 6-phosphate 1-phosphotransferase">
    <location>
        <begin position="2"/>
        <end position="404"/>
    </location>
</feature>
<feature type="active site" description="Proton acceptor" evidence="1">
    <location>
        <position position="151"/>
    </location>
</feature>
<feature type="binding site" evidence="1">
    <location>
        <position position="12"/>
    </location>
    <ligand>
        <name>diphosphate</name>
        <dbReference type="ChEBI" id="CHEBI:33019"/>
    </ligand>
</feature>
<feature type="binding site" evidence="1">
    <location>
        <position position="121"/>
    </location>
    <ligand>
        <name>Mg(2+)</name>
        <dbReference type="ChEBI" id="CHEBI:18420"/>
        <note>catalytic</note>
    </ligand>
</feature>
<feature type="binding site" evidence="1">
    <location>
        <begin position="149"/>
        <end position="151"/>
    </location>
    <ligand>
        <name>substrate</name>
    </ligand>
</feature>
<feature type="binding site" evidence="1">
    <location>
        <begin position="194"/>
        <end position="196"/>
    </location>
    <ligand>
        <name>substrate</name>
    </ligand>
</feature>
<feature type="binding site" evidence="1">
    <location>
        <position position="266"/>
    </location>
    <ligand>
        <name>substrate</name>
    </ligand>
</feature>
<feature type="binding site" evidence="1">
    <location>
        <begin position="323"/>
        <end position="326"/>
    </location>
    <ligand>
        <name>substrate</name>
    </ligand>
</feature>
<feature type="site" description="Important for catalytic activity and substrate specificity; stabilizes the transition state when the phosphoryl donor is PPi; prevents ATP from binding by mimicking the alpha-phosphate group of ATP" evidence="1">
    <location>
        <position position="122"/>
    </location>
</feature>
<feature type="site" description="Important for catalytic activity; stabilizes the transition state when the phosphoryl donor is PPi" evidence="1">
    <location>
        <position position="148"/>
    </location>
</feature>
<comment type="function">
    <text evidence="1 2">Catalyzes the phosphorylation of D-fructose 6-phosphate, the first committing step of glycolysis. Uses inorganic phosphate (PPi) as phosphoryl donor instead of ATP like common ATP-dependent phosphofructokinases (ATP-PFKs), which renders the reaction reversible, and can thus function both in glycolysis and gluconeogenesis. Consistently, PPi-PFK can replace the enzymes of both the forward (ATP-PFK) and reverse (fructose-bisphosphatase (FBPase)) reactions.</text>
</comment>
<comment type="catalytic activity">
    <reaction evidence="1 2">
        <text>beta-D-fructose 6-phosphate + diphosphate = beta-D-fructose 1,6-bisphosphate + phosphate + H(+)</text>
        <dbReference type="Rhea" id="RHEA:13613"/>
        <dbReference type="ChEBI" id="CHEBI:15378"/>
        <dbReference type="ChEBI" id="CHEBI:32966"/>
        <dbReference type="ChEBI" id="CHEBI:33019"/>
        <dbReference type="ChEBI" id="CHEBI:43474"/>
        <dbReference type="ChEBI" id="CHEBI:57634"/>
        <dbReference type="EC" id="2.7.1.90"/>
    </reaction>
</comment>
<comment type="cofactor">
    <cofactor evidence="1">
        <name>Mg(2+)</name>
        <dbReference type="ChEBI" id="CHEBI:18420"/>
    </cofactor>
</comment>
<comment type="activity regulation">
    <text evidence="1 2">Non-allosteric.</text>
</comment>
<comment type="biophysicochemical properties">
    <kinetics>
        <KM evidence="2">0.6 mM for phosphate</KM>
        <KM evidence="2">0.069 mM for diphosphate</KM>
        <KM evidence="2">0.1 mM for fructose 6-phosphate</KM>
        <KM evidence="2">0.051 mM for fructose 1,6-bisphosphate</KM>
        <Vmax evidence="2">258.0 umol/min/mg enzyme for the forward reaction</Vmax>
        <Vmax evidence="2">232.0 umol/min/mg enzyme for the reverse reaction</Vmax>
    </kinetics>
    <phDependence>
        <text evidence="2">Optimum pH is 7.5 for the forward reaction and 7.0-7.4 for the reverse reaction.</text>
    </phDependence>
</comment>
<comment type="pathway">
    <text evidence="1">Carbohydrate degradation; glycolysis; D-glyceraldehyde 3-phosphate and glycerone phosphate from D-glucose: step 3/4.</text>
</comment>
<comment type="subunit">
    <text evidence="2">Homodimer.</text>
</comment>
<comment type="subcellular location">
    <subcellularLocation>
        <location evidence="1">Cytoplasm</location>
    </subcellularLocation>
</comment>
<comment type="similarity">
    <text evidence="1">Belongs to the phosphofructokinase type A (PFKA) family. PPi-dependent PFK group II subfamily. Clade 'P' sub-subfamily.</text>
</comment>
<protein>
    <recommendedName>
        <fullName evidence="1">Pyrophosphate--fructose 6-phosphate 1-phosphotransferase</fullName>
        <ecNumber evidence="1">2.7.1.90</ecNumber>
    </recommendedName>
    <alternativeName>
        <fullName evidence="1">6-phosphofructokinase, pyrophosphate dependent</fullName>
    </alternativeName>
    <alternativeName>
        <fullName evidence="1">PPi-dependent phosphofructokinase</fullName>
        <shortName evidence="1">PPi-PFK</shortName>
    </alternativeName>
    <alternativeName>
        <fullName evidence="1">Pyrophosphate-dependent 6-phosphofructose-1-kinase</fullName>
    </alternativeName>
</protein>
<keyword id="KW-0963">Cytoplasm</keyword>
<keyword id="KW-0903">Direct protein sequencing</keyword>
<keyword id="KW-0324">Glycolysis</keyword>
<keyword id="KW-0418">Kinase</keyword>
<keyword id="KW-0460">Magnesium</keyword>
<keyword id="KW-0479">Metal-binding</keyword>
<keyword id="KW-1185">Reference proteome</keyword>
<keyword id="KW-0808">Transferase</keyword>
<proteinExistence type="evidence at protein level"/>